<protein>
    <recommendedName>
        <fullName evidence="1">Small ribosomal subunit protein uS5</fullName>
    </recommendedName>
    <alternativeName>
        <fullName evidence="2">30S ribosomal protein S5</fullName>
    </alternativeName>
</protein>
<dbReference type="EMBL" id="Y07778">
    <property type="protein sequence ID" value="CAA69097.1"/>
    <property type="molecule type" value="Genomic_DNA"/>
</dbReference>
<dbReference type="EMBL" id="CP000077">
    <property type="protein sequence ID" value="AAY79969.1"/>
    <property type="molecule type" value="Genomic_DNA"/>
</dbReference>
<dbReference type="RefSeq" id="WP_011277471.1">
    <property type="nucleotide sequence ID" value="NC_007181.1"/>
</dbReference>
<dbReference type="PDB" id="8HKX">
    <property type="method" value="EM"/>
    <property type="resolution" value="3.14 A"/>
    <property type="chains" value="AS5P=11-214"/>
</dbReference>
<dbReference type="PDB" id="8HKY">
    <property type="method" value="EM"/>
    <property type="resolution" value="4.45 A"/>
    <property type="chains" value="AS5P=11-214"/>
</dbReference>
<dbReference type="PDB" id="8HKZ">
    <property type="method" value="EM"/>
    <property type="resolution" value="4.78 A"/>
    <property type="chains" value="AS5P=11-214"/>
</dbReference>
<dbReference type="PDB" id="8HL1">
    <property type="method" value="EM"/>
    <property type="resolution" value="3.93 A"/>
    <property type="chains" value="AS5P=11-214"/>
</dbReference>
<dbReference type="PDB" id="8HL2">
    <property type="method" value="EM"/>
    <property type="resolution" value="4.10 A"/>
    <property type="chains" value="AS5P=11-214"/>
</dbReference>
<dbReference type="PDB" id="8HL3">
    <property type="method" value="EM"/>
    <property type="resolution" value="4.80 A"/>
    <property type="chains" value="AS5P=11-214"/>
</dbReference>
<dbReference type="PDB" id="8HL4">
    <property type="method" value="EM"/>
    <property type="resolution" value="4.62 A"/>
    <property type="chains" value="AS5P=11-214"/>
</dbReference>
<dbReference type="PDB" id="8HL5">
    <property type="method" value="EM"/>
    <property type="resolution" value="5.72 A"/>
    <property type="chains" value="AS5P=11-214"/>
</dbReference>
<dbReference type="PDB" id="8WKP">
    <property type="method" value="EM"/>
    <property type="resolution" value="4.62 A"/>
    <property type="chains" value="AS5P=11-214"/>
</dbReference>
<dbReference type="PDB" id="8WQ2">
    <property type="method" value="EM"/>
    <property type="resolution" value="4.10 A"/>
    <property type="chains" value="AS5P=11-214"/>
</dbReference>
<dbReference type="PDB" id="8WQ4">
    <property type="method" value="EM"/>
    <property type="resolution" value="4.53 A"/>
    <property type="chains" value="AS5P=11-214"/>
</dbReference>
<dbReference type="PDBsum" id="8HKX"/>
<dbReference type="PDBsum" id="8HKY"/>
<dbReference type="PDBsum" id="8HKZ"/>
<dbReference type="PDBsum" id="8HL1"/>
<dbReference type="PDBsum" id="8HL2"/>
<dbReference type="PDBsum" id="8HL3"/>
<dbReference type="PDBsum" id="8HL4"/>
<dbReference type="PDBsum" id="8HL5"/>
<dbReference type="PDBsum" id="8WKP"/>
<dbReference type="PDBsum" id="8WQ2"/>
<dbReference type="PDBsum" id="8WQ4"/>
<dbReference type="EMDB" id="EMD-34862"/>
<dbReference type="EMDB" id="EMD-34863"/>
<dbReference type="EMDB" id="EMD-34864"/>
<dbReference type="EMDB" id="EMD-34866"/>
<dbReference type="EMDB" id="EMD-34867"/>
<dbReference type="EMDB" id="EMD-34868"/>
<dbReference type="EMDB" id="EMD-34869"/>
<dbReference type="EMDB" id="EMD-34870"/>
<dbReference type="EMDB" id="EMD-37604"/>
<dbReference type="EMDB" id="EMD-37733"/>
<dbReference type="EMDB" id="EMD-37734"/>
<dbReference type="SMR" id="O05641"/>
<dbReference type="STRING" id="330779.Saci_0577"/>
<dbReference type="GeneID" id="14551098"/>
<dbReference type="KEGG" id="sai:Saci_0577"/>
<dbReference type="PATRIC" id="fig|330779.12.peg.556"/>
<dbReference type="eggNOG" id="arCOG04087">
    <property type="taxonomic scope" value="Archaea"/>
</dbReference>
<dbReference type="HOGENOM" id="CLU_065898_0_1_2"/>
<dbReference type="Proteomes" id="UP000001018">
    <property type="component" value="Chromosome"/>
</dbReference>
<dbReference type="GO" id="GO:0022627">
    <property type="term" value="C:cytosolic small ribosomal subunit"/>
    <property type="evidence" value="ECO:0007669"/>
    <property type="project" value="TreeGrafter"/>
</dbReference>
<dbReference type="GO" id="GO:0019843">
    <property type="term" value="F:rRNA binding"/>
    <property type="evidence" value="ECO:0007669"/>
    <property type="project" value="UniProtKB-UniRule"/>
</dbReference>
<dbReference type="GO" id="GO:0003735">
    <property type="term" value="F:structural constituent of ribosome"/>
    <property type="evidence" value="ECO:0007669"/>
    <property type="project" value="InterPro"/>
</dbReference>
<dbReference type="GO" id="GO:0006412">
    <property type="term" value="P:translation"/>
    <property type="evidence" value="ECO:0007669"/>
    <property type="project" value="UniProtKB-UniRule"/>
</dbReference>
<dbReference type="FunFam" id="3.30.160.20:FF:000002">
    <property type="entry name" value="40S ribosomal protein S2"/>
    <property type="match status" value="1"/>
</dbReference>
<dbReference type="FunFam" id="3.30.230.10:FF:000004">
    <property type="entry name" value="40S ribosomal protein S2"/>
    <property type="match status" value="1"/>
</dbReference>
<dbReference type="Gene3D" id="3.30.160.20">
    <property type="match status" value="1"/>
</dbReference>
<dbReference type="Gene3D" id="3.30.230.10">
    <property type="match status" value="1"/>
</dbReference>
<dbReference type="HAMAP" id="MF_01307_A">
    <property type="entry name" value="Ribosomal_uS5_A"/>
    <property type="match status" value="1"/>
</dbReference>
<dbReference type="InterPro" id="IPR020568">
    <property type="entry name" value="Ribosomal_Su5_D2-typ_SF"/>
</dbReference>
<dbReference type="InterPro" id="IPR000851">
    <property type="entry name" value="Ribosomal_uS5"/>
</dbReference>
<dbReference type="InterPro" id="IPR047866">
    <property type="entry name" value="Ribosomal_uS5_arc"/>
</dbReference>
<dbReference type="InterPro" id="IPR005324">
    <property type="entry name" value="Ribosomal_uS5_C"/>
</dbReference>
<dbReference type="InterPro" id="IPR005711">
    <property type="entry name" value="Ribosomal_uS5_euk/arc"/>
</dbReference>
<dbReference type="InterPro" id="IPR013810">
    <property type="entry name" value="Ribosomal_uS5_N"/>
</dbReference>
<dbReference type="InterPro" id="IPR018192">
    <property type="entry name" value="Ribosomal_uS5_N_CS"/>
</dbReference>
<dbReference type="InterPro" id="IPR014721">
    <property type="entry name" value="Ribsml_uS5_D2-typ_fold_subgr"/>
</dbReference>
<dbReference type="NCBIfam" id="NF003125">
    <property type="entry name" value="PRK04044.1"/>
    <property type="match status" value="1"/>
</dbReference>
<dbReference type="NCBIfam" id="TIGR01020">
    <property type="entry name" value="uS5_euk_arch"/>
    <property type="match status" value="1"/>
</dbReference>
<dbReference type="PANTHER" id="PTHR13718:SF4">
    <property type="entry name" value="40S RIBOSOMAL PROTEIN S2"/>
    <property type="match status" value="1"/>
</dbReference>
<dbReference type="PANTHER" id="PTHR13718">
    <property type="entry name" value="RIBOSOMAL S SUBUNIT"/>
    <property type="match status" value="1"/>
</dbReference>
<dbReference type="Pfam" id="PF00333">
    <property type="entry name" value="Ribosomal_S5"/>
    <property type="match status" value="1"/>
</dbReference>
<dbReference type="Pfam" id="PF03719">
    <property type="entry name" value="Ribosomal_S5_C"/>
    <property type="match status" value="1"/>
</dbReference>
<dbReference type="SUPFAM" id="SSF54768">
    <property type="entry name" value="dsRNA-binding domain-like"/>
    <property type="match status" value="1"/>
</dbReference>
<dbReference type="SUPFAM" id="SSF54211">
    <property type="entry name" value="Ribosomal protein S5 domain 2-like"/>
    <property type="match status" value="1"/>
</dbReference>
<dbReference type="PROSITE" id="PS00585">
    <property type="entry name" value="RIBOSOMAL_S5"/>
    <property type="match status" value="1"/>
</dbReference>
<dbReference type="PROSITE" id="PS50881">
    <property type="entry name" value="S5_DSRBD"/>
    <property type="match status" value="1"/>
</dbReference>
<feature type="chain" id="PRO_0000131660" description="Small ribosomal subunit protein uS5">
    <location>
        <begin position="1"/>
        <end position="214"/>
    </location>
</feature>
<feature type="domain" description="S5 DRBM" evidence="1">
    <location>
        <begin position="54"/>
        <end position="117"/>
    </location>
</feature>
<accession>O05641</accession>
<accession>Q4JB60</accession>
<reference key="1">
    <citation type="journal article" date="1999" name="Mol. Phylogenet. Evol.">
        <title>The structure and evolution of the ribosomal proteins encoded in the spc operon of the archaeon (Crenarchaeota) Sulfolobus acidocaldarius.</title>
        <authorList>
            <person name="Yang D."/>
            <person name="Kusser I."/>
            <person name="Koepke A.K."/>
            <person name="Koop B.F."/>
            <person name="Matheson A.T."/>
        </authorList>
    </citation>
    <scope>NUCLEOTIDE SEQUENCE [GENOMIC DNA]</scope>
    <source>
        <strain>ATCC 33909 / DSM 639 / JCM 8929 / NBRC 15157 / NCIMB 11770</strain>
    </source>
</reference>
<reference key="2">
    <citation type="journal article" date="2005" name="J. Bacteriol.">
        <title>The genome of Sulfolobus acidocaldarius, a model organism of the Crenarchaeota.</title>
        <authorList>
            <person name="Chen L."/>
            <person name="Bruegger K."/>
            <person name="Skovgaard M."/>
            <person name="Redder P."/>
            <person name="She Q."/>
            <person name="Torarinsson E."/>
            <person name="Greve B."/>
            <person name="Awayez M."/>
            <person name="Zibat A."/>
            <person name="Klenk H.-P."/>
            <person name="Garrett R.A."/>
        </authorList>
    </citation>
    <scope>NUCLEOTIDE SEQUENCE [LARGE SCALE GENOMIC DNA]</scope>
    <source>
        <strain>ATCC 33909 / DSM 639 / JCM 8929 / NBRC 15157 / NCIMB 11770</strain>
    </source>
</reference>
<evidence type="ECO:0000255" key="1">
    <source>
        <dbReference type="HAMAP-Rule" id="MF_01307"/>
    </source>
</evidence>
<evidence type="ECO:0000305" key="2"/>
<gene>
    <name evidence="1" type="primary">rps5</name>
    <name type="ordered locus">Saci_0577</name>
</gene>
<organism>
    <name type="scientific">Sulfolobus acidocaldarius (strain ATCC 33909 / DSM 639 / JCM 8929 / NBRC 15157 / NCIMB 11770)</name>
    <dbReference type="NCBI Taxonomy" id="330779"/>
    <lineage>
        <taxon>Archaea</taxon>
        <taxon>Thermoproteota</taxon>
        <taxon>Thermoprotei</taxon>
        <taxon>Sulfolobales</taxon>
        <taxon>Sulfolobaceae</taxon>
        <taxon>Sulfolobus</taxon>
    </lineage>
</organism>
<comment type="function">
    <text evidence="1">With S4 and S12 plays an important role in translational accuracy.</text>
</comment>
<comment type="subunit">
    <text evidence="1">Part of the 30S ribosomal subunit. Contacts protein S4.</text>
</comment>
<comment type="domain">
    <text>The N-terminal domain interacts with the head of the 30S subunit; the C-terminal domain interacts with the body and contacts protein S4. The interaction surface between S4 and S5 is involved in control of translational fidelity.</text>
</comment>
<comment type="similarity">
    <text evidence="1">Belongs to the universal ribosomal protein uS5 family.</text>
</comment>
<proteinExistence type="evidence at protein level"/>
<keyword id="KW-0002">3D-structure</keyword>
<keyword id="KW-1185">Reference proteome</keyword>
<keyword id="KW-0687">Ribonucleoprotein</keyword>
<keyword id="KW-0689">Ribosomal protein</keyword>
<keyword id="KW-0694">RNA-binding</keyword>
<keyword id="KW-0699">rRNA-binding</keyword>
<name>RS5_SULAC</name>
<sequence length="214" mass="23876">MSEEVPVIKLEDWKPRTKVGQLIKEGKINSMKELFERNLPIVEPEIVDVLLPKLRYDIVDIGIVQKQTDAGELSRYKVLIVMGNMDGYISYGTGKAKQLRVAIQKAIRDAKMRIIPVRRGCGSWECTCGESHSLPFIVSGKAGSVEVTLLPAPKGTGLVVGSVLKTFLSLAGLKDVWSRTKGSTYTHENFIKAAYIALYNTYRFVTPVDWGRMK</sequence>